<dbReference type="EC" id="2.4.2.10" evidence="1"/>
<dbReference type="EMBL" id="CP000305">
    <property type="protein sequence ID" value="ABG20132.1"/>
    <property type="molecule type" value="Genomic_DNA"/>
</dbReference>
<dbReference type="EMBL" id="ACNQ01000019">
    <property type="protein sequence ID" value="EEO74718.1"/>
    <property type="molecule type" value="Genomic_DNA"/>
</dbReference>
<dbReference type="RefSeq" id="WP_002208996.1">
    <property type="nucleotide sequence ID" value="NZ_ACNQ01000019.1"/>
</dbReference>
<dbReference type="SMR" id="Q1CCZ8"/>
<dbReference type="GeneID" id="57974545"/>
<dbReference type="KEGG" id="ypn:YPN_3805"/>
<dbReference type="HOGENOM" id="CLU_074878_0_1_6"/>
<dbReference type="UniPathway" id="UPA00070">
    <property type="reaction ID" value="UER00119"/>
</dbReference>
<dbReference type="Proteomes" id="UP000008936">
    <property type="component" value="Chromosome"/>
</dbReference>
<dbReference type="GO" id="GO:0005737">
    <property type="term" value="C:cytoplasm"/>
    <property type="evidence" value="ECO:0007669"/>
    <property type="project" value="TreeGrafter"/>
</dbReference>
<dbReference type="GO" id="GO:0000287">
    <property type="term" value="F:magnesium ion binding"/>
    <property type="evidence" value="ECO:0007669"/>
    <property type="project" value="UniProtKB-UniRule"/>
</dbReference>
<dbReference type="GO" id="GO:0004588">
    <property type="term" value="F:orotate phosphoribosyltransferase activity"/>
    <property type="evidence" value="ECO:0007669"/>
    <property type="project" value="UniProtKB-UniRule"/>
</dbReference>
<dbReference type="GO" id="GO:0006207">
    <property type="term" value="P:'de novo' pyrimidine nucleobase biosynthetic process"/>
    <property type="evidence" value="ECO:0007669"/>
    <property type="project" value="TreeGrafter"/>
</dbReference>
<dbReference type="GO" id="GO:0044205">
    <property type="term" value="P:'de novo' UMP biosynthetic process"/>
    <property type="evidence" value="ECO:0007669"/>
    <property type="project" value="UniProtKB-UniRule"/>
</dbReference>
<dbReference type="GO" id="GO:0046132">
    <property type="term" value="P:pyrimidine ribonucleoside biosynthetic process"/>
    <property type="evidence" value="ECO:0007669"/>
    <property type="project" value="TreeGrafter"/>
</dbReference>
<dbReference type="CDD" id="cd06223">
    <property type="entry name" value="PRTases_typeI"/>
    <property type="match status" value="1"/>
</dbReference>
<dbReference type="FunFam" id="3.40.50.2020:FF:000008">
    <property type="entry name" value="Orotate phosphoribosyltransferase"/>
    <property type="match status" value="1"/>
</dbReference>
<dbReference type="Gene3D" id="3.40.50.2020">
    <property type="match status" value="1"/>
</dbReference>
<dbReference type="HAMAP" id="MF_01208">
    <property type="entry name" value="PyrE"/>
    <property type="match status" value="1"/>
</dbReference>
<dbReference type="InterPro" id="IPR023031">
    <property type="entry name" value="OPRT"/>
</dbReference>
<dbReference type="InterPro" id="IPR004467">
    <property type="entry name" value="Or_phspho_trans_dom"/>
</dbReference>
<dbReference type="InterPro" id="IPR000836">
    <property type="entry name" value="PRibTrfase_dom"/>
</dbReference>
<dbReference type="InterPro" id="IPR029057">
    <property type="entry name" value="PRTase-like"/>
</dbReference>
<dbReference type="NCBIfam" id="TIGR00336">
    <property type="entry name" value="pyrE"/>
    <property type="match status" value="1"/>
</dbReference>
<dbReference type="PANTHER" id="PTHR46683">
    <property type="entry name" value="OROTATE PHOSPHORIBOSYLTRANSFERASE 1-RELATED"/>
    <property type="match status" value="1"/>
</dbReference>
<dbReference type="PANTHER" id="PTHR46683:SF1">
    <property type="entry name" value="OROTATE PHOSPHORIBOSYLTRANSFERASE 1-RELATED"/>
    <property type="match status" value="1"/>
</dbReference>
<dbReference type="Pfam" id="PF00156">
    <property type="entry name" value="Pribosyltran"/>
    <property type="match status" value="1"/>
</dbReference>
<dbReference type="SUPFAM" id="SSF53271">
    <property type="entry name" value="PRTase-like"/>
    <property type="match status" value="1"/>
</dbReference>
<dbReference type="PROSITE" id="PS00103">
    <property type="entry name" value="PUR_PYR_PR_TRANSFER"/>
    <property type="match status" value="1"/>
</dbReference>
<sequence>MKAYQREFIEFALNKQVLKFGEFTLKSGRISPYFFNAGLFNTGLDLAKLGRFYAAALMDCGVEFDLLFGPAYKGIPIATTTAVALAEHHERDVPYCFNRKEAKTHGEGGNLVGSPLQGRVMLVDDVITAGTAIRESMEIINAQGATLAGVMISLDRQERGRGEISAIQEVERDYHCKVIAIVTLNDVIRYLEDKPEMAEHLVAVRQYREQYGVTL</sequence>
<protein>
    <recommendedName>
        <fullName evidence="1">Orotate phosphoribosyltransferase</fullName>
        <shortName evidence="1">OPRT</shortName>
        <shortName evidence="1">OPRTase</shortName>
        <ecNumber evidence="1">2.4.2.10</ecNumber>
    </recommendedName>
</protein>
<organism>
    <name type="scientific">Yersinia pestis bv. Antiqua (strain Nepal516)</name>
    <dbReference type="NCBI Taxonomy" id="377628"/>
    <lineage>
        <taxon>Bacteria</taxon>
        <taxon>Pseudomonadati</taxon>
        <taxon>Pseudomonadota</taxon>
        <taxon>Gammaproteobacteria</taxon>
        <taxon>Enterobacterales</taxon>
        <taxon>Yersiniaceae</taxon>
        <taxon>Yersinia</taxon>
    </lineage>
</organism>
<proteinExistence type="inferred from homology"/>
<keyword id="KW-0328">Glycosyltransferase</keyword>
<keyword id="KW-0460">Magnesium</keyword>
<keyword id="KW-0665">Pyrimidine biosynthesis</keyword>
<keyword id="KW-0808">Transferase</keyword>
<comment type="function">
    <text evidence="1">Catalyzes the transfer of a ribosyl phosphate group from 5-phosphoribose 1-diphosphate to orotate, leading to the formation of orotidine monophosphate (OMP).</text>
</comment>
<comment type="catalytic activity">
    <reaction evidence="1">
        <text>orotidine 5'-phosphate + diphosphate = orotate + 5-phospho-alpha-D-ribose 1-diphosphate</text>
        <dbReference type="Rhea" id="RHEA:10380"/>
        <dbReference type="ChEBI" id="CHEBI:30839"/>
        <dbReference type="ChEBI" id="CHEBI:33019"/>
        <dbReference type="ChEBI" id="CHEBI:57538"/>
        <dbReference type="ChEBI" id="CHEBI:58017"/>
        <dbReference type="EC" id="2.4.2.10"/>
    </reaction>
</comment>
<comment type="cofactor">
    <cofactor evidence="1">
        <name>Mg(2+)</name>
        <dbReference type="ChEBI" id="CHEBI:18420"/>
    </cofactor>
</comment>
<comment type="pathway">
    <text evidence="1">Pyrimidine metabolism; UMP biosynthesis via de novo pathway; UMP from orotate: step 1/2.</text>
</comment>
<comment type="subunit">
    <text evidence="1">Homodimer.</text>
</comment>
<comment type="similarity">
    <text evidence="1">Belongs to the purine/pyrimidine phosphoribosyltransferase family. PyrE subfamily.</text>
</comment>
<gene>
    <name evidence="1" type="primary">pyrE</name>
    <name type="ordered locus">YPN_3805</name>
    <name type="ORF">YP516_4325</name>
</gene>
<reference key="1">
    <citation type="journal article" date="2006" name="J. Bacteriol.">
        <title>Complete genome sequence of Yersinia pestis strains Antiqua and Nepal516: evidence of gene reduction in an emerging pathogen.</title>
        <authorList>
            <person name="Chain P.S.G."/>
            <person name="Hu P."/>
            <person name="Malfatti S.A."/>
            <person name="Radnedge L."/>
            <person name="Larimer F."/>
            <person name="Vergez L.M."/>
            <person name="Worsham P."/>
            <person name="Chu M.C."/>
            <person name="Andersen G.L."/>
        </authorList>
    </citation>
    <scope>NUCLEOTIDE SEQUENCE [LARGE SCALE GENOMIC DNA]</scope>
    <source>
        <strain>Nepal516</strain>
    </source>
</reference>
<reference key="2">
    <citation type="submission" date="2009-04" db="EMBL/GenBank/DDBJ databases">
        <title>Yersinia pestis Nepal516A whole genome shotgun sequencing project.</title>
        <authorList>
            <person name="Plunkett G. III"/>
            <person name="Anderson B.D."/>
            <person name="Baumler D.J."/>
            <person name="Burland V."/>
            <person name="Cabot E.L."/>
            <person name="Glasner J.D."/>
            <person name="Mau B."/>
            <person name="Neeno-Eckwall E."/>
            <person name="Perna N.T."/>
            <person name="Munk A.C."/>
            <person name="Tapia R."/>
            <person name="Green L.D."/>
            <person name="Rogers Y.C."/>
            <person name="Detter J.C."/>
            <person name="Bruce D.C."/>
            <person name="Brettin T.S."/>
        </authorList>
    </citation>
    <scope>NUCLEOTIDE SEQUENCE [LARGE SCALE GENOMIC DNA]</scope>
    <source>
        <strain>Nepal516</strain>
    </source>
</reference>
<evidence type="ECO:0000255" key="1">
    <source>
        <dbReference type="HAMAP-Rule" id="MF_01208"/>
    </source>
</evidence>
<name>PYRE_YERPN</name>
<accession>Q1CCZ8</accession>
<accession>D1Q2G5</accession>
<feature type="chain" id="PRO_1000066330" description="Orotate phosphoribosyltransferase">
    <location>
        <begin position="1"/>
        <end position="215"/>
    </location>
</feature>
<feature type="binding site" description="in other chain" evidence="1">
    <location>
        <position position="26"/>
    </location>
    <ligand>
        <name>5-phospho-alpha-D-ribose 1-diphosphate</name>
        <dbReference type="ChEBI" id="CHEBI:58017"/>
        <note>ligand shared between dimeric partners</note>
    </ligand>
</feature>
<feature type="binding site" evidence="1">
    <location>
        <begin position="34"/>
        <end position="35"/>
    </location>
    <ligand>
        <name>orotate</name>
        <dbReference type="ChEBI" id="CHEBI:30839"/>
    </ligand>
</feature>
<feature type="binding site" description="in other chain" evidence="1">
    <location>
        <begin position="72"/>
        <end position="73"/>
    </location>
    <ligand>
        <name>5-phospho-alpha-D-ribose 1-diphosphate</name>
        <dbReference type="ChEBI" id="CHEBI:58017"/>
        <note>ligand shared between dimeric partners</note>
    </ligand>
</feature>
<feature type="binding site" evidence="1">
    <location>
        <position position="99"/>
    </location>
    <ligand>
        <name>5-phospho-alpha-D-ribose 1-diphosphate</name>
        <dbReference type="ChEBI" id="CHEBI:58017"/>
        <note>ligand shared between dimeric partners</note>
    </ligand>
</feature>
<feature type="binding site" description="in other chain" evidence="1">
    <location>
        <position position="100"/>
    </location>
    <ligand>
        <name>5-phospho-alpha-D-ribose 1-diphosphate</name>
        <dbReference type="ChEBI" id="CHEBI:58017"/>
        <note>ligand shared between dimeric partners</note>
    </ligand>
</feature>
<feature type="binding site" evidence="1">
    <location>
        <position position="103"/>
    </location>
    <ligand>
        <name>5-phospho-alpha-D-ribose 1-diphosphate</name>
        <dbReference type="ChEBI" id="CHEBI:58017"/>
        <note>ligand shared between dimeric partners</note>
    </ligand>
</feature>
<feature type="binding site" evidence="1">
    <location>
        <position position="105"/>
    </location>
    <ligand>
        <name>5-phospho-alpha-D-ribose 1-diphosphate</name>
        <dbReference type="ChEBI" id="CHEBI:58017"/>
        <note>ligand shared between dimeric partners</note>
    </ligand>
</feature>
<feature type="binding site" description="in other chain" evidence="1">
    <location>
        <begin position="124"/>
        <end position="132"/>
    </location>
    <ligand>
        <name>5-phospho-alpha-D-ribose 1-diphosphate</name>
        <dbReference type="ChEBI" id="CHEBI:58017"/>
        <note>ligand shared between dimeric partners</note>
    </ligand>
</feature>
<feature type="binding site" evidence="1">
    <location>
        <position position="128"/>
    </location>
    <ligand>
        <name>orotate</name>
        <dbReference type="ChEBI" id="CHEBI:30839"/>
    </ligand>
</feature>
<feature type="binding site" evidence="1">
    <location>
        <position position="156"/>
    </location>
    <ligand>
        <name>orotate</name>
        <dbReference type="ChEBI" id="CHEBI:30839"/>
    </ligand>
</feature>